<sequence length="104" mass="11528">MFAVVKASGFQRLVEVGSVISIDPTNVDSGGFVHLPVLLLVDGAEVVSDPDKLRLARVSAKFLRKLRGPKVRIHKFKNKTGYHKRQGHRQGVYVFSVTSIERGD</sequence>
<evidence type="ECO:0000255" key="1">
    <source>
        <dbReference type="HAMAP-Rule" id="MF_01363"/>
    </source>
</evidence>
<evidence type="ECO:0000305" key="2"/>
<accession>Q83I12</accession>
<dbReference type="EMBL" id="BX251411">
    <property type="protein sequence ID" value="CAD66966.1"/>
    <property type="molecule type" value="Genomic_DNA"/>
</dbReference>
<dbReference type="RefSeq" id="WP_011096246.1">
    <property type="nucleotide sequence ID" value="NC_004551.1"/>
</dbReference>
<dbReference type="SMR" id="Q83I12"/>
<dbReference type="GeneID" id="67388068"/>
<dbReference type="KEGG" id="tws:TW292"/>
<dbReference type="HOGENOM" id="CLU_061463_3_0_11"/>
<dbReference type="GO" id="GO:0005737">
    <property type="term" value="C:cytoplasm"/>
    <property type="evidence" value="ECO:0007669"/>
    <property type="project" value="UniProtKB-ARBA"/>
</dbReference>
<dbReference type="GO" id="GO:1990904">
    <property type="term" value="C:ribonucleoprotein complex"/>
    <property type="evidence" value="ECO:0007669"/>
    <property type="project" value="UniProtKB-KW"/>
</dbReference>
<dbReference type="GO" id="GO:0005840">
    <property type="term" value="C:ribosome"/>
    <property type="evidence" value="ECO:0007669"/>
    <property type="project" value="UniProtKB-KW"/>
</dbReference>
<dbReference type="GO" id="GO:0019843">
    <property type="term" value="F:rRNA binding"/>
    <property type="evidence" value="ECO:0007669"/>
    <property type="project" value="UniProtKB-UniRule"/>
</dbReference>
<dbReference type="GO" id="GO:0003735">
    <property type="term" value="F:structural constituent of ribosome"/>
    <property type="evidence" value="ECO:0007669"/>
    <property type="project" value="InterPro"/>
</dbReference>
<dbReference type="GO" id="GO:0006412">
    <property type="term" value="P:translation"/>
    <property type="evidence" value="ECO:0007669"/>
    <property type="project" value="UniProtKB-UniRule"/>
</dbReference>
<dbReference type="HAMAP" id="MF_01363">
    <property type="entry name" value="Ribosomal_bL21"/>
    <property type="match status" value="1"/>
</dbReference>
<dbReference type="InterPro" id="IPR028909">
    <property type="entry name" value="bL21-like"/>
</dbReference>
<dbReference type="InterPro" id="IPR036164">
    <property type="entry name" value="bL21-like_sf"/>
</dbReference>
<dbReference type="InterPro" id="IPR001787">
    <property type="entry name" value="Ribosomal_bL21"/>
</dbReference>
<dbReference type="NCBIfam" id="TIGR00061">
    <property type="entry name" value="L21"/>
    <property type="match status" value="1"/>
</dbReference>
<dbReference type="Pfam" id="PF00829">
    <property type="entry name" value="Ribosomal_L21p"/>
    <property type="match status" value="1"/>
</dbReference>
<dbReference type="SUPFAM" id="SSF141091">
    <property type="entry name" value="L21p-like"/>
    <property type="match status" value="1"/>
</dbReference>
<proteinExistence type="inferred from homology"/>
<protein>
    <recommendedName>
        <fullName evidence="1">Large ribosomal subunit protein bL21</fullName>
    </recommendedName>
    <alternativeName>
        <fullName evidence="2">50S ribosomal protein L21</fullName>
    </alternativeName>
</protein>
<organism>
    <name type="scientific">Tropheryma whipplei (strain TW08/27)</name>
    <name type="common">Whipple's bacillus</name>
    <dbReference type="NCBI Taxonomy" id="218496"/>
    <lineage>
        <taxon>Bacteria</taxon>
        <taxon>Bacillati</taxon>
        <taxon>Actinomycetota</taxon>
        <taxon>Actinomycetes</taxon>
        <taxon>Micrococcales</taxon>
        <taxon>Tropherymataceae</taxon>
        <taxon>Tropheryma</taxon>
    </lineage>
</organism>
<comment type="function">
    <text evidence="1">This protein binds to 23S rRNA in the presence of protein L20.</text>
</comment>
<comment type="subunit">
    <text evidence="1">Part of the 50S ribosomal subunit. Contacts protein L20.</text>
</comment>
<comment type="similarity">
    <text evidence="1">Belongs to the bacterial ribosomal protein bL21 family.</text>
</comment>
<gene>
    <name evidence="1" type="primary">rplU</name>
    <name type="ordered locus">TW292</name>
</gene>
<reference key="1">
    <citation type="journal article" date="2003" name="Lancet">
        <title>Sequencing and analysis of the genome of the Whipple's disease bacterium Tropheryma whipplei.</title>
        <authorList>
            <person name="Bentley S.D."/>
            <person name="Maiwald M."/>
            <person name="Murphy L.D."/>
            <person name="Pallen M.J."/>
            <person name="Yeats C.A."/>
            <person name="Dover L.G."/>
            <person name="Norbertczak H.T."/>
            <person name="Besra G.S."/>
            <person name="Quail M.A."/>
            <person name="Harris D.E."/>
            <person name="von Herbay A."/>
            <person name="Goble A."/>
            <person name="Rutter S."/>
            <person name="Squares R."/>
            <person name="Squares S."/>
            <person name="Barrell B.G."/>
            <person name="Parkhill J."/>
            <person name="Relman D.A."/>
        </authorList>
    </citation>
    <scope>NUCLEOTIDE SEQUENCE [LARGE SCALE GENOMIC DNA]</scope>
    <source>
        <strain>TW08/27</strain>
    </source>
</reference>
<feature type="chain" id="PRO_0000270743" description="Large ribosomal subunit protein bL21">
    <location>
        <begin position="1"/>
        <end position="104"/>
    </location>
</feature>
<keyword id="KW-0687">Ribonucleoprotein</keyword>
<keyword id="KW-0689">Ribosomal protein</keyword>
<keyword id="KW-0694">RNA-binding</keyword>
<keyword id="KW-0699">rRNA-binding</keyword>
<name>RL21_TROW8</name>